<feature type="chain" id="PRO_1000071057" description="Ribosome-recycling factor">
    <location>
        <begin position="1"/>
        <end position="185"/>
    </location>
</feature>
<feature type="region of interest" description="Disordered" evidence="2">
    <location>
        <begin position="142"/>
        <end position="161"/>
    </location>
</feature>
<name>RRF_PAEAT</name>
<protein>
    <recommendedName>
        <fullName evidence="1">Ribosome-recycling factor</fullName>
        <shortName evidence="1">RRF</shortName>
    </recommendedName>
    <alternativeName>
        <fullName evidence="1">Ribosome-releasing factor</fullName>
    </alternativeName>
</protein>
<accession>A1R4W2</accession>
<organism>
    <name type="scientific">Paenarthrobacter aurescens (strain TC1)</name>
    <dbReference type="NCBI Taxonomy" id="290340"/>
    <lineage>
        <taxon>Bacteria</taxon>
        <taxon>Bacillati</taxon>
        <taxon>Actinomycetota</taxon>
        <taxon>Actinomycetes</taxon>
        <taxon>Micrococcales</taxon>
        <taxon>Micrococcaceae</taxon>
        <taxon>Paenarthrobacter</taxon>
    </lineage>
</organism>
<sequence>MIEETLLEAGEKMDKAVEVAKDDFASIRTGRANPALYNKVIVEYYGTPTPLQQLASFGVPDARTILITPYDKTALRDIEKALSDSEVGANPSNDGNVIRVTIPELTKERRKEYVKIVKGKGEDAKVSIRSIRRKAKDSLDKLVKDGEAGEDEGARAEKELDALTKQHVDSIDELLKRKEAELLEV</sequence>
<comment type="function">
    <text evidence="1">Responsible for the release of ribosomes from messenger RNA at the termination of protein biosynthesis. May increase the efficiency of translation by recycling ribosomes from one round of translation to another.</text>
</comment>
<comment type="subcellular location">
    <subcellularLocation>
        <location evidence="1">Cytoplasm</location>
    </subcellularLocation>
</comment>
<comment type="similarity">
    <text evidence="1">Belongs to the RRF family.</text>
</comment>
<keyword id="KW-0963">Cytoplasm</keyword>
<keyword id="KW-0648">Protein biosynthesis</keyword>
<reference key="1">
    <citation type="journal article" date="2006" name="PLoS Genet.">
        <title>Secrets of soil survival revealed by the genome sequence of Arthrobacter aurescens TC1.</title>
        <authorList>
            <person name="Mongodin E.F."/>
            <person name="Shapir N."/>
            <person name="Daugherty S.C."/>
            <person name="DeBoy R.T."/>
            <person name="Emerson J.B."/>
            <person name="Shvartzbeyn A."/>
            <person name="Radune D."/>
            <person name="Vamathevan J."/>
            <person name="Riggs F."/>
            <person name="Grinberg V."/>
            <person name="Khouri H.M."/>
            <person name="Wackett L.P."/>
            <person name="Nelson K.E."/>
            <person name="Sadowsky M.J."/>
        </authorList>
    </citation>
    <scope>NUCLEOTIDE SEQUENCE [LARGE SCALE GENOMIC DNA]</scope>
    <source>
        <strain>TC1</strain>
    </source>
</reference>
<evidence type="ECO:0000255" key="1">
    <source>
        <dbReference type="HAMAP-Rule" id="MF_00040"/>
    </source>
</evidence>
<evidence type="ECO:0000256" key="2">
    <source>
        <dbReference type="SAM" id="MobiDB-lite"/>
    </source>
</evidence>
<gene>
    <name evidence="1" type="primary">frr</name>
    <name type="ordered locus">AAur_1506</name>
</gene>
<dbReference type="EMBL" id="CP000474">
    <property type="protein sequence ID" value="ABM08981.1"/>
    <property type="molecule type" value="Genomic_DNA"/>
</dbReference>
<dbReference type="RefSeq" id="WP_011774219.1">
    <property type="nucleotide sequence ID" value="NC_008711.1"/>
</dbReference>
<dbReference type="SMR" id="A1R4W2"/>
<dbReference type="STRING" id="290340.AAur_1506"/>
<dbReference type="GeneID" id="97300421"/>
<dbReference type="KEGG" id="aau:AAur_1506"/>
<dbReference type="eggNOG" id="COG0233">
    <property type="taxonomic scope" value="Bacteria"/>
</dbReference>
<dbReference type="HOGENOM" id="CLU_073981_2_0_11"/>
<dbReference type="OrthoDB" id="9804006at2"/>
<dbReference type="Proteomes" id="UP000000637">
    <property type="component" value="Chromosome"/>
</dbReference>
<dbReference type="GO" id="GO:0005737">
    <property type="term" value="C:cytoplasm"/>
    <property type="evidence" value="ECO:0007669"/>
    <property type="project" value="UniProtKB-SubCell"/>
</dbReference>
<dbReference type="GO" id="GO:0043023">
    <property type="term" value="F:ribosomal large subunit binding"/>
    <property type="evidence" value="ECO:0007669"/>
    <property type="project" value="TreeGrafter"/>
</dbReference>
<dbReference type="GO" id="GO:0006415">
    <property type="term" value="P:translational termination"/>
    <property type="evidence" value="ECO:0007669"/>
    <property type="project" value="UniProtKB-UniRule"/>
</dbReference>
<dbReference type="CDD" id="cd00520">
    <property type="entry name" value="RRF"/>
    <property type="match status" value="1"/>
</dbReference>
<dbReference type="FunFam" id="1.10.132.20:FF:000001">
    <property type="entry name" value="Ribosome-recycling factor"/>
    <property type="match status" value="1"/>
</dbReference>
<dbReference type="FunFam" id="3.30.1360.40:FF:000001">
    <property type="entry name" value="Ribosome-recycling factor"/>
    <property type="match status" value="1"/>
</dbReference>
<dbReference type="Gene3D" id="3.30.1360.40">
    <property type="match status" value="1"/>
</dbReference>
<dbReference type="Gene3D" id="1.10.132.20">
    <property type="entry name" value="Ribosome-recycling factor"/>
    <property type="match status" value="1"/>
</dbReference>
<dbReference type="HAMAP" id="MF_00040">
    <property type="entry name" value="RRF"/>
    <property type="match status" value="1"/>
</dbReference>
<dbReference type="InterPro" id="IPR002661">
    <property type="entry name" value="Ribosome_recyc_fac"/>
</dbReference>
<dbReference type="InterPro" id="IPR023584">
    <property type="entry name" value="Ribosome_recyc_fac_dom"/>
</dbReference>
<dbReference type="InterPro" id="IPR036191">
    <property type="entry name" value="RRF_sf"/>
</dbReference>
<dbReference type="NCBIfam" id="TIGR00496">
    <property type="entry name" value="frr"/>
    <property type="match status" value="1"/>
</dbReference>
<dbReference type="PANTHER" id="PTHR20982:SF3">
    <property type="entry name" value="MITOCHONDRIAL RIBOSOME RECYCLING FACTOR PSEUDO 1"/>
    <property type="match status" value="1"/>
</dbReference>
<dbReference type="PANTHER" id="PTHR20982">
    <property type="entry name" value="RIBOSOME RECYCLING FACTOR"/>
    <property type="match status" value="1"/>
</dbReference>
<dbReference type="Pfam" id="PF01765">
    <property type="entry name" value="RRF"/>
    <property type="match status" value="1"/>
</dbReference>
<dbReference type="SUPFAM" id="SSF55194">
    <property type="entry name" value="Ribosome recycling factor, RRF"/>
    <property type="match status" value="1"/>
</dbReference>
<proteinExistence type="inferred from homology"/>